<sequence>MISPSTKLYGLIGYPLGHSISFYIHNAAFRALSIDALYLNIPIEPEFFSKAILGIKYLPIYGLNVTIPHKESIIEFLDEISEISNILGAVNTVYRENHKWKGDNTDFGGFLKTLEDLNLSSDFSCLILGAGGAARAVIYAVLEYGFKEVYLTNRTYERAEKIAVEVKKNKNFEIKVIPWEDREKISEKVILINTTSIGLDGKETPWNGDFKKLVFVYDIIYNPKETPLLKLAKENNVPYKNGLDMLIYQACLSWEKWFGFVGPFEVMKREAEKLL</sequence>
<organism>
    <name type="scientific">Dictyoglomus turgidum (strain DSM 6724 / Z-1310)</name>
    <dbReference type="NCBI Taxonomy" id="515635"/>
    <lineage>
        <taxon>Bacteria</taxon>
        <taxon>Pseudomonadati</taxon>
        <taxon>Dictyoglomota</taxon>
        <taxon>Dictyoglomia</taxon>
        <taxon>Dictyoglomales</taxon>
        <taxon>Dictyoglomaceae</taxon>
        <taxon>Dictyoglomus</taxon>
    </lineage>
</organism>
<feature type="chain" id="PRO_1000118873" description="Shikimate dehydrogenase (NADP(+))">
    <location>
        <begin position="1"/>
        <end position="275"/>
    </location>
</feature>
<feature type="active site" description="Proton acceptor" evidence="1">
    <location>
        <position position="70"/>
    </location>
</feature>
<feature type="binding site" evidence="1">
    <location>
        <begin position="19"/>
        <end position="21"/>
    </location>
    <ligand>
        <name>shikimate</name>
        <dbReference type="ChEBI" id="CHEBI:36208"/>
    </ligand>
</feature>
<feature type="binding site" evidence="1">
    <location>
        <position position="66"/>
    </location>
    <ligand>
        <name>shikimate</name>
        <dbReference type="ChEBI" id="CHEBI:36208"/>
    </ligand>
</feature>
<feature type="binding site" evidence="1">
    <location>
        <position position="82"/>
    </location>
    <ligand>
        <name>NADP(+)</name>
        <dbReference type="ChEBI" id="CHEBI:58349"/>
    </ligand>
</feature>
<feature type="binding site" evidence="1">
    <location>
        <position position="91"/>
    </location>
    <ligand>
        <name>shikimate</name>
        <dbReference type="ChEBI" id="CHEBI:36208"/>
    </ligand>
</feature>
<feature type="binding site" evidence="1">
    <location>
        <position position="106"/>
    </location>
    <ligand>
        <name>shikimate</name>
        <dbReference type="ChEBI" id="CHEBI:36208"/>
    </ligand>
</feature>
<feature type="binding site" evidence="1">
    <location>
        <begin position="129"/>
        <end position="133"/>
    </location>
    <ligand>
        <name>NADP(+)</name>
        <dbReference type="ChEBI" id="CHEBI:58349"/>
    </ligand>
</feature>
<feature type="binding site" evidence="1">
    <location>
        <begin position="153"/>
        <end position="158"/>
    </location>
    <ligand>
        <name>NADP(+)</name>
        <dbReference type="ChEBI" id="CHEBI:58349"/>
    </ligand>
</feature>
<feature type="binding site" evidence="1">
    <location>
        <position position="219"/>
    </location>
    <ligand>
        <name>NADP(+)</name>
        <dbReference type="ChEBI" id="CHEBI:58349"/>
    </ligand>
</feature>
<feature type="binding site" evidence="1">
    <location>
        <position position="221"/>
    </location>
    <ligand>
        <name>shikimate</name>
        <dbReference type="ChEBI" id="CHEBI:36208"/>
    </ligand>
</feature>
<feature type="binding site" evidence="1">
    <location>
        <position position="242"/>
    </location>
    <ligand>
        <name>NADP(+)</name>
        <dbReference type="ChEBI" id="CHEBI:58349"/>
    </ligand>
</feature>
<reference key="1">
    <citation type="journal article" date="2016" name="Front. Microbiol.">
        <title>The complete genome sequence of hyperthermophile Dictyoglomus turgidum DSM 6724 reveals a specialized carbohydrate fermentor.</title>
        <authorList>
            <person name="Brumm P.J."/>
            <person name="Gowda K."/>
            <person name="Robb F.T."/>
            <person name="Mead D.A."/>
        </authorList>
    </citation>
    <scope>NUCLEOTIDE SEQUENCE [LARGE SCALE GENOMIC DNA]</scope>
    <source>
        <strain>DSM 6724 / Z-1310</strain>
    </source>
</reference>
<proteinExistence type="inferred from homology"/>
<protein>
    <recommendedName>
        <fullName evidence="1">Shikimate dehydrogenase (NADP(+))</fullName>
        <shortName evidence="1">SDH</shortName>
        <ecNumber evidence="1">1.1.1.25</ecNumber>
    </recommendedName>
</protein>
<comment type="function">
    <text evidence="1">Involved in the biosynthesis of the chorismate, which leads to the biosynthesis of aromatic amino acids. Catalyzes the reversible NADPH linked reduction of 3-dehydroshikimate (DHSA) to yield shikimate (SA).</text>
</comment>
<comment type="catalytic activity">
    <reaction evidence="1">
        <text>shikimate + NADP(+) = 3-dehydroshikimate + NADPH + H(+)</text>
        <dbReference type="Rhea" id="RHEA:17737"/>
        <dbReference type="ChEBI" id="CHEBI:15378"/>
        <dbReference type="ChEBI" id="CHEBI:16630"/>
        <dbReference type="ChEBI" id="CHEBI:36208"/>
        <dbReference type="ChEBI" id="CHEBI:57783"/>
        <dbReference type="ChEBI" id="CHEBI:58349"/>
        <dbReference type="EC" id="1.1.1.25"/>
    </reaction>
</comment>
<comment type="pathway">
    <text evidence="1">Metabolic intermediate biosynthesis; chorismate biosynthesis; chorismate from D-erythrose 4-phosphate and phosphoenolpyruvate: step 4/7.</text>
</comment>
<comment type="subunit">
    <text evidence="1">Homodimer.</text>
</comment>
<comment type="similarity">
    <text evidence="1">Belongs to the shikimate dehydrogenase family.</text>
</comment>
<gene>
    <name evidence="1" type="primary">aroE</name>
    <name type="ordered locus">Dtur_1054</name>
</gene>
<accession>B8E257</accession>
<dbReference type="EC" id="1.1.1.25" evidence="1"/>
<dbReference type="EMBL" id="CP001251">
    <property type="protein sequence ID" value="ACK42334.1"/>
    <property type="molecule type" value="Genomic_DNA"/>
</dbReference>
<dbReference type="RefSeq" id="WP_012583417.1">
    <property type="nucleotide sequence ID" value="NC_011661.1"/>
</dbReference>
<dbReference type="RefSeq" id="YP_002352948.1">
    <property type="nucleotide sequence ID" value="NC_011661.1"/>
</dbReference>
<dbReference type="SMR" id="B8E257"/>
<dbReference type="FunCoup" id="B8E257">
    <property type="interactions" value="367"/>
</dbReference>
<dbReference type="STRING" id="515635.Dtur_1054"/>
<dbReference type="EnsemblBacteria" id="ACK42334">
    <property type="protein sequence ID" value="ACK42334"/>
    <property type="gene ID" value="Dtur_1054"/>
</dbReference>
<dbReference type="KEGG" id="dtu:Dtur_1054"/>
<dbReference type="PATRIC" id="fig|515635.4.peg.1091"/>
<dbReference type="eggNOG" id="COG0169">
    <property type="taxonomic scope" value="Bacteria"/>
</dbReference>
<dbReference type="HOGENOM" id="CLU_044063_4_1_0"/>
<dbReference type="InParanoid" id="B8E257"/>
<dbReference type="OrthoDB" id="9792692at2"/>
<dbReference type="UniPathway" id="UPA00053">
    <property type="reaction ID" value="UER00087"/>
</dbReference>
<dbReference type="Proteomes" id="UP000007719">
    <property type="component" value="Chromosome"/>
</dbReference>
<dbReference type="GO" id="GO:0005829">
    <property type="term" value="C:cytosol"/>
    <property type="evidence" value="ECO:0000318"/>
    <property type="project" value="GO_Central"/>
</dbReference>
<dbReference type="GO" id="GO:0050661">
    <property type="term" value="F:NADP binding"/>
    <property type="evidence" value="ECO:0000318"/>
    <property type="project" value="GO_Central"/>
</dbReference>
<dbReference type="GO" id="GO:0004764">
    <property type="term" value="F:shikimate 3-dehydrogenase (NADP+) activity"/>
    <property type="evidence" value="ECO:0000318"/>
    <property type="project" value="GO_Central"/>
</dbReference>
<dbReference type="GO" id="GO:0008652">
    <property type="term" value="P:amino acid biosynthetic process"/>
    <property type="evidence" value="ECO:0007669"/>
    <property type="project" value="UniProtKB-KW"/>
</dbReference>
<dbReference type="GO" id="GO:0009073">
    <property type="term" value="P:aromatic amino acid family biosynthetic process"/>
    <property type="evidence" value="ECO:0007669"/>
    <property type="project" value="UniProtKB-KW"/>
</dbReference>
<dbReference type="GO" id="GO:0009423">
    <property type="term" value="P:chorismate biosynthetic process"/>
    <property type="evidence" value="ECO:0000318"/>
    <property type="project" value="GO_Central"/>
</dbReference>
<dbReference type="GO" id="GO:0019632">
    <property type="term" value="P:shikimate metabolic process"/>
    <property type="evidence" value="ECO:0000318"/>
    <property type="project" value="GO_Central"/>
</dbReference>
<dbReference type="CDD" id="cd01065">
    <property type="entry name" value="NAD_bind_Shikimate_DH"/>
    <property type="match status" value="1"/>
</dbReference>
<dbReference type="Gene3D" id="3.40.50.10860">
    <property type="entry name" value="Leucine Dehydrogenase, chain A, domain 1"/>
    <property type="match status" value="1"/>
</dbReference>
<dbReference type="Gene3D" id="3.40.50.720">
    <property type="entry name" value="NAD(P)-binding Rossmann-like Domain"/>
    <property type="match status" value="1"/>
</dbReference>
<dbReference type="HAMAP" id="MF_00222">
    <property type="entry name" value="Shikimate_DH_AroE"/>
    <property type="match status" value="1"/>
</dbReference>
<dbReference type="InterPro" id="IPR046346">
    <property type="entry name" value="Aminoacid_DH-like_N_sf"/>
</dbReference>
<dbReference type="InterPro" id="IPR036291">
    <property type="entry name" value="NAD(P)-bd_dom_sf"/>
</dbReference>
<dbReference type="InterPro" id="IPR041121">
    <property type="entry name" value="SDH_C"/>
</dbReference>
<dbReference type="InterPro" id="IPR011342">
    <property type="entry name" value="Shikimate_DH"/>
</dbReference>
<dbReference type="InterPro" id="IPR013708">
    <property type="entry name" value="Shikimate_DH-bd_N"/>
</dbReference>
<dbReference type="InterPro" id="IPR022893">
    <property type="entry name" value="Shikimate_DH_fam"/>
</dbReference>
<dbReference type="InterPro" id="IPR006151">
    <property type="entry name" value="Shikm_DH/Glu-tRNA_Rdtase"/>
</dbReference>
<dbReference type="NCBIfam" id="TIGR00507">
    <property type="entry name" value="aroE"/>
    <property type="match status" value="1"/>
</dbReference>
<dbReference type="PANTHER" id="PTHR21089:SF1">
    <property type="entry name" value="BIFUNCTIONAL 3-DEHYDROQUINATE DEHYDRATASE_SHIKIMATE DEHYDROGENASE, CHLOROPLASTIC"/>
    <property type="match status" value="1"/>
</dbReference>
<dbReference type="PANTHER" id="PTHR21089">
    <property type="entry name" value="SHIKIMATE DEHYDROGENASE"/>
    <property type="match status" value="1"/>
</dbReference>
<dbReference type="Pfam" id="PF18317">
    <property type="entry name" value="SDH_C"/>
    <property type="match status" value="1"/>
</dbReference>
<dbReference type="Pfam" id="PF01488">
    <property type="entry name" value="Shikimate_DH"/>
    <property type="match status" value="1"/>
</dbReference>
<dbReference type="Pfam" id="PF08501">
    <property type="entry name" value="Shikimate_dh_N"/>
    <property type="match status" value="1"/>
</dbReference>
<dbReference type="SUPFAM" id="SSF53223">
    <property type="entry name" value="Aminoacid dehydrogenase-like, N-terminal domain"/>
    <property type="match status" value="1"/>
</dbReference>
<dbReference type="SUPFAM" id="SSF51735">
    <property type="entry name" value="NAD(P)-binding Rossmann-fold domains"/>
    <property type="match status" value="1"/>
</dbReference>
<evidence type="ECO:0000255" key="1">
    <source>
        <dbReference type="HAMAP-Rule" id="MF_00222"/>
    </source>
</evidence>
<name>AROE_DICTD</name>
<keyword id="KW-0028">Amino-acid biosynthesis</keyword>
<keyword id="KW-0057">Aromatic amino acid biosynthesis</keyword>
<keyword id="KW-0521">NADP</keyword>
<keyword id="KW-0560">Oxidoreductase</keyword>
<keyword id="KW-1185">Reference proteome</keyword>